<organism>
    <name type="scientific">Lacticaseibacillus paracasei (strain ATCC 334 / BCRC 17002 / CCUG 31169 / CIP 107868 / KCTC 3260 / NRRL B-441)</name>
    <name type="common">Lactobacillus paracasei</name>
    <dbReference type="NCBI Taxonomy" id="321967"/>
    <lineage>
        <taxon>Bacteria</taxon>
        <taxon>Bacillati</taxon>
        <taxon>Bacillota</taxon>
        <taxon>Bacilli</taxon>
        <taxon>Lactobacillales</taxon>
        <taxon>Lactobacillaceae</taxon>
        <taxon>Lacticaseibacillus</taxon>
    </lineage>
</organism>
<comment type="function">
    <text evidence="1">Increases the formation of ribosomal termination complexes and stimulates activities of RF-1 and RF-2. It binds guanine nucleotides and has strong preference for UGA stop codons. It may interact directly with the ribosome. The stimulation of RF-1 and RF-2 is significantly reduced by GTP and GDP, but not by GMP.</text>
</comment>
<comment type="subcellular location">
    <subcellularLocation>
        <location evidence="1">Cytoplasm</location>
    </subcellularLocation>
</comment>
<comment type="similarity">
    <text evidence="1">Belongs to the TRAFAC class translation factor GTPase superfamily. Classic translation factor GTPase family. PrfC subfamily.</text>
</comment>
<name>RF3_LACP3</name>
<keyword id="KW-0963">Cytoplasm</keyword>
<keyword id="KW-0342">GTP-binding</keyword>
<keyword id="KW-0547">Nucleotide-binding</keyword>
<keyword id="KW-0648">Protein biosynthesis</keyword>
<keyword id="KW-1185">Reference proteome</keyword>
<feature type="chain" id="PRO_1000023654" description="Peptide chain release factor 3">
    <location>
        <begin position="1"/>
        <end position="524"/>
    </location>
</feature>
<feature type="domain" description="tr-type G">
    <location>
        <begin position="11"/>
        <end position="278"/>
    </location>
</feature>
<feature type="binding site" evidence="1">
    <location>
        <begin position="20"/>
        <end position="27"/>
    </location>
    <ligand>
        <name>GTP</name>
        <dbReference type="ChEBI" id="CHEBI:37565"/>
    </ligand>
</feature>
<feature type="binding site" evidence="1">
    <location>
        <begin position="88"/>
        <end position="92"/>
    </location>
    <ligand>
        <name>GTP</name>
        <dbReference type="ChEBI" id="CHEBI:37565"/>
    </ligand>
</feature>
<feature type="binding site" evidence="1">
    <location>
        <begin position="142"/>
        <end position="145"/>
    </location>
    <ligand>
        <name>GTP</name>
        <dbReference type="ChEBI" id="CHEBI:37565"/>
    </ligand>
</feature>
<reference key="1">
    <citation type="journal article" date="2006" name="Proc. Natl. Acad. Sci. U.S.A.">
        <title>Comparative genomics of the lactic acid bacteria.</title>
        <authorList>
            <person name="Makarova K.S."/>
            <person name="Slesarev A."/>
            <person name="Wolf Y.I."/>
            <person name="Sorokin A."/>
            <person name="Mirkin B."/>
            <person name="Koonin E.V."/>
            <person name="Pavlov A."/>
            <person name="Pavlova N."/>
            <person name="Karamychev V."/>
            <person name="Polouchine N."/>
            <person name="Shakhova V."/>
            <person name="Grigoriev I."/>
            <person name="Lou Y."/>
            <person name="Rohksar D."/>
            <person name="Lucas S."/>
            <person name="Huang K."/>
            <person name="Goodstein D.M."/>
            <person name="Hawkins T."/>
            <person name="Plengvidhya V."/>
            <person name="Welker D."/>
            <person name="Hughes J."/>
            <person name="Goh Y."/>
            <person name="Benson A."/>
            <person name="Baldwin K."/>
            <person name="Lee J.-H."/>
            <person name="Diaz-Muniz I."/>
            <person name="Dosti B."/>
            <person name="Smeianov V."/>
            <person name="Wechter W."/>
            <person name="Barabote R."/>
            <person name="Lorca G."/>
            <person name="Altermann E."/>
            <person name="Barrangou R."/>
            <person name="Ganesan B."/>
            <person name="Xie Y."/>
            <person name="Rawsthorne H."/>
            <person name="Tamir D."/>
            <person name="Parker C."/>
            <person name="Breidt F."/>
            <person name="Broadbent J.R."/>
            <person name="Hutkins R."/>
            <person name="O'Sullivan D."/>
            <person name="Steele J."/>
            <person name="Unlu G."/>
            <person name="Saier M.H. Jr."/>
            <person name="Klaenhammer T."/>
            <person name="Richardson P."/>
            <person name="Kozyavkin S."/>
            <person name="Weimer B.C."/>
            <person name="Mills D.A."/>
        </authorList>
    </citation>
    <scope>NUCLEOTIDE SEQUENCE [LARGE SCALE GENOMIC DNA]</scope>
    <source>
        <strain>ATCC 334 / BCRC 17002 / CCUG 31169 / CIP 107868 / KCTC 3260 / NRRL B-441</strain>
    </source>
</reference>
<dbReference type="EMBL" id="CP000423">
    <property type="protein sequence ID" value="ABJ70536.1"/>
    <property type="molecule type" value="Genomic_DNA"/>
</dbReference>
<dbReference type="RefSeq" id="WP_003594896.1">
    <property type="nucleotide sequence ID" value="NC_008526.1"/>
</dbReference>
<dbReference type="RefSeq" id="YP_806978.1">
    <property type="nucleotide sequence ID" value="NC_008526.1"/>
</dbReference>
<dbReference type="SMR" id="Q037T6"/>
<dbReference type="STRING" id="321967.LSEI_1764"/>
<dbReference type="PaxDb" id="321967-LSEI_1764"/>
<dbReference type="KEGG" id="lca:LSEI_1764"/>
<dbReference type="PATRIC" id="fig|321967.11.peg.1743"/>
<dbReference type="HOGENOM" id="CLU_002794_2_1_9"/>
<dbReference type="Proteomes" id="UP000001651">
    <property type="component" value="Chromosome"/>
</dbReference>
<dbReference type="GO" id="GO:0005829">
    <property type="term" value="C:cytosol"/>
    <property type="evidence" value="ECO:0007669"/>
    <property type="project" value="TreeGrafter"/>
</dbReference>
<dbReference type="GO" id="GO:0005525">
    <property type="term" value="F:GTP binding"/>
    <property type="evidence" value="ECO:0007669"/>
    <property type="project" value="UniProtKB-UniRule"/>
</dbReference>
<dbReference type="GO" id="GO:0003924">
    <property type="term" value="F:GTPase activity"/>
    <property type="evidence" value="ECO:0007669"/>
    <property type="project" value="InterPro"/>
</dbReference>
<dbReference type="GO" id="GO:0016150">
    <property type="term" value="F:translation release factor activity, codon nonspecific"/>
    <property type="evidence" value="ECO:0007669"/>
    <property type="project" value="TreeGrafter"/>
</dbReference>
<dbReference type="GO" id="GO:0016149">
    <property type="term" value="F:translation release factor activity, codon specific"/>
    <property type="evidence" value="ECO:0007669"/>
    <property type="project" value="UniProtKB-UniRule"/>
</dbReference>
<dbReference type="GO" id="GO:0006449">
    <property type="term" value="P:regulation of translational termination"/>
    <property type="evidence" value="ECO:0007669"/>
    <property type="project" value="UniProtKB-UniRule"/>
</dbReference>
<dbReference type="CDD" id="cd04169">
    <property type="entry name" value="RF3"/>
    <property type="match status" value="1"/>
</dbReference>
<dbReference type="CDD" id="cd16259">
    <property type="entry name" value="RF3_III"/>
    <property type="match status" value="1"/>
</dbReference>
<dbReference type="FunFam" id="2.40.30.10:FF:000040">
    <property type="entry name" value="Peptide chain release factor 3"/>
    <property type="match status" value="1"/>
</dbReference>
<dbReference type="FunFam" id="3.30.70.3280:FF:000001">
    <property type="entry name" value="Peptide chain release factor 3"/>
    <property type="match status" value="1"/>
</dbReference>
<dbReference type="FunFam" id="3.40.50.300:FF:000542">
    <property type="entry name" value="Peptide chain release factor 3"/>
    <property type="match status" value="1"/>
</dbReference>
<dbReference type="Gene3D" id="3.40.50.300">
    <property type="entry name" value="P-loop containing nucleotide triphosphate hydrolases"/>
    <property type="match status" value="1"/>
</dbReference>
<dbReference type="Gene3D" id="3.30.70.3280">
    <property type="entry name" value="Peptide chain release factor 3, domain III"/>
    <property type="match status" value="1"/>
</dbReference>
<dbReference type="Gene3D" id="2.40.30.10">
    <property type="entry name" value="Translation factors"/>
    <property type="match status" value="1"/>
</dbReference>
<dbReference type="HAMAP" id="MF_00072">
    <property type="entry name" value="Rel_fac_3"/>
    <property type="match status" value="1"/>
</dbReference>
<dbReference type="InterPro" id="IPR053905">
    <property type="entry name" value="EF-G-like_DII"/>
</dbReference>
<dbReference type="InterPro" id="IPR035647">
    <property type="entry name" value="EFG_III/V"/>
</dbReference>
<dbReference type="InterPro" id="IPR031157">
    <property type="entry name" value="G_TR_CS"/>
</dbReference>
<dbReference type="InterPro" id="IPR027417">
    <property type="entry name" value="P-loop_NTPase"/>
</dbReference>
<dbReference type="InterPro" id="IPR004548">
    <property type="entry name" value="PrfC"/>
</dbReference>
<dbReference type="InterPro" id="IPR032090">
    <property type="entry name" value="RF3_C"/>
</dbReference>
<dbReference type="InterPro" id="IPR038467">
    <property type="entry name" value="RF3_dom_3_sf"/>
</dbReference>
<dbReference type="InterPro" id="IPR041732">
    <property type="entry name" value="RF3_GTP-bd"/>
</dbReference>
<dbReference type="InterPro" id="IPR005225">
    <property type="entry name" value="Small_GTP-bd"/>
</dbReference>
<dbReference type="InterPro" id="IPR000795">
    <property type="entry name" value="T_Tr_GTP-bd_dom"/>
</dbReference>
<dbReference type="InterPro" id="IPR009000">
    <property type="entry name" value="Transl_B-barrel_sf"/>
</dbReference>
<dbReference type="NCBIfam" id="TIGR00503">
    <property type="entry name" value="prfC"/>
    <property type="match status" value="1"/>
</dbReference>
<dbReference type="NCBIfam" id="NF001964">
    <property type="entry name" value="PRK00741.1"/>
    <property type="match status" value="1"/>
</dbReference>
<dbReference type="NCBIfam" id="TIGR00231">
    <property type="entry name" value="small_GTP"/>
    <property type="match status" value="1"/>
</dbReference>
<dbReference type="PANTHER" id="PTHR43556">
    <property type="entry name" value="PEPTIDE CHAIN RELEASE FACTOR RF3"/>
    <property type="match status" value="1"/>
</dbReference>
<dbReference type="PANTHER" id="PTHR43556:SF2">
    <property type="entry name" value="PEPTIDE CHAIN RELEASE FACTOR RF3"/>
    <property type="match status" value="1"/>
</dbReference>
<dbReference type="Pfam" id="PF22042">
    <property type="entry name" value="EF-G_D2"/>
    <property type="match status" value="1"/>
</dbReference>
<dbReference type="Pfam" id="PF00009">
    <property type="entry name" value="GTP_EFTU"/>
    <property type="match status" value="1"/>
</dbReference>
<dbReference type="Pfam" id="PF16658">
    <property type="entry name" value="RF3_C"/>
    <property type="match status" value="1"/>
</dbReference>
<dbReference type="PRINTS" id="PR00315">
    <property type="entry name" value="ELONGATNFCT"/>
</dbReference>
<dbReference type="SUPFAM" id="SSF54980">
    <property type="entry name" value="EF-G C-terminal domain-like"/>
    <property type="match status" value="1"/>
</dbReference>
<dbReference type="SUPFAM" id="SSF52540">
    <property type="entry name" value="P-loop containing nucleoside triphosphate hydrolases"/>
    <property type="match status" value="1"/>
</dbReference>
<dbReference type="SUPFAM" id="SSF50447">
    <property type="entry name" value="Translation proteins"/>
    <property type="match status" value="1"/>
</dbReference>
<dbReference type="PROSITE" id="PS00301">
    <property type="entry name" value="G_TR_1"/>
    <property type="match status" value="1"/>
</dbReference>
<dbReference type="PROSITE" id="PS51722">
    <property type="entry name" value="G_TR_2"/>
    <property type="match status" value="1"/>
</dbReference>
<sequence>MKPQELAKEVAKRRTFAIISHPDAGKTTITEQLLLFGGVIREAGTVKGRKSGHFAKSDWMEIEKKRGISVTSSVMQFNYQGKRINILDTPGHEDFSEDTYRTLMAVDAAVMVIDSAKGIEAQTKKLFKVVKQRGIPIFTFMNKLDRDGREPLDLIAELEDLLGIEGYAMNWPIGMGKGLKGLYDRVNQRIELYRREGDDRFLPLNDQGQLDPSQPLTQDSIYTQTLDDIELLNDAGNQFNLKKIMAGEQTPVFFGSALTNFGVETFLNSFVQYAPEPGPKKTEQGGEVNPTNPELSAFVFKIQANMNPAHRDRIAFVRIVSGEFERGMDVILHRTGKTMRLNNSTEFMADTRETVSTAVAGDIVGLYDTGNFQIGDTIYQGKEPIQFEKLPQFTPELFVRVTPKNVMKQKSFHKGMQQLVQEGAVQLYKTYNTNDYILGAVGQLQFEVFQFRMLHEYHSEVIMTPIGSRTARWINPDQLDEKMSSSRNLLVQDIHGDPLFLFENQYAERWFADKYPDVKLTAKM</sequence>
<evidence type="ECO:0000255" key="1">
    <source>
        <dbReference type="HAMAP-Rule" id="MF_00072"/>
    </source>
</evidence>
<protein>
    <recommendedName>
        <fullName evidence="1">Peptide chain release factor 3</fullName>
        <shortName evidence="1">RF-3</shortName>
    </recommendedName>
</protein>
<gene>
    <name evidence="1" type="primary">prfC</name>
    <name type="ordered locus">LSEI_1764</name>
</gene>
<proteinExistence type="inferred from homology"/>
<accession>Q037T6</accession>